<dbReference type="EMBL" id="CU928179">
    <property type="protein sequence ID" value="CAR29491.1"/>
    <property type="molecule type" value="Genomic_DNA"/>
</dbReference>
<dbReference type="RefSeq" id="XP_002498424.1">
    <property type="nucleotide sequence ID" value="XM_002498379.1"/>
</dbReference>
<dbReference type="SMR" id="C5E057"/>
<dbReference type="FunCoup" id="C5E057">
    <property type="interactions" value="46"/>
</dbReference>
<dbReference type="STRING" id="559307.C5E057"/>
<dbReference type="GeneID" id="8206231"/>
<dbReference type="KEGG" id="zro:ZYRO0G09944g"/>
<dbReference type="HOGENOM" id="CLU_089418_2_1_1"/>
<dbReference type="InParanoid" id="C5E057"/>
<dbReference type="Proteomes" id="UP000008536">
    <property type="component" value="Chromosome G"/>
</dbReference>
<dbReference type="GO" id="GO:0005789">
    <property type="term" value="C:endoplasmic reticulum membrane"/>
    <property type="evidence" value="ECO:0007669"/>
    <property type="project" value="UniProtKB-SubCell"/>
</dbReference>
<dbReference type="GO" id="GO:0043529">
    <property type="term" value="C:GET complex"/>
    <property type="evidence" value="ECO:0007669"/>
    <property type="project" value="UniProtKB-UniRule"/>
</dbReference>
<dbReference type="GO" id="GO:0000139">
    <property type="term" value="C:Golgi membrane"/>
    <property type="evidence" value="ECO:0007669"/>
    <property type="project" value="UniProtKB-SubCell"/>
</dbReference>
<dbReference type="GO" id="GO:0043495">
    <property type="term" value="F:protein-membrane adaptor activity"/>
    <property type="evidence" value="ECO:0007669"/>
    <property type="project" value="TreeGrafter"/>
</dbReference>
<dbReference type="GO" id="GO:0071816">
    <property type="term" value="P:tail-anchored membrane protein insertion into ER membrane"/>
    <property type="evidence" value="ECO:0007669"/>
    <property type="project" value="InterPro"/>
</dbReference>
<dbReference type="GO" id="GO:0016192">
    <property type="term" value="P:vesicle-mediated transport"/>
    <property type="evidence" value="ECO:0007669"/>
    <property type="project" value="UniProtKB-KW"/>
</dbReference>
<dbReference type="Gene3D" id="1.10.287.660">
    <property type="entry name" value="Helix hairpin bin"/>
    <property type="match status" value="1"/>
</dbReference>
<dbReference type="HAMAP" id="MF_03113">
    <property type="entry name" value="Get1"/>
    <property type="match status" value="1"/>
</dbReference>
<dbReference type="InterPro" id="IPR028945">
    <property type="entry name" value="Get1"/>
</dbReference>
<dbReference type="InterPro" id="IPR027538">
    <property type="entry name" value="Get1_fungi"/>
</dbReference>
<dbReference type="InterPro" id="IPR029012">
    <property type="entry name" value="Helix_hairpin_bin_sf"/>
</dbReference>
<dbReference type="PANTHER" id="PTHR42650:SF1">
    <property type="entry name" value="GUIDED ENTRY OF TAIL-ANCHORED PROTEINS FACTOR 1"/>
    <property type="match status" value="1"/>
</dbReference>
<dbReference type="PANTHER" id="PTHR42650">
    <property type="entry name" value="TAIL-ANCHORED PROTEIN INSERTION RECEPTOR WRB"/>
    <property type="match status" value="1"/>
</dbReference>
<dbReference type="Pfam" id="PF04420">
    <property type="entry name" value="CHD5"/>
    <property type="match status" value="1"/>
</dbReference>
<accession>C5E057</accession>
<sequence>MDSGGWIVYCCIFFILLGKVLEYTSSYQDKWFTKLTLTPEARKLNSQYHELLSERLRLQEENHSISAQDNYARWTKNNRKLGELDKKLGTIRDKLQETNTSSKKVFGRVKLIGLTIPFWILKIWQRSHVVYHFPKQDLFPKLVTGVWARGWLYLALGPLQYLRNGSLNIQDYAPHGVSLGIWIWALQATINTLEFLVKQVILEKPVSPPPQKSKSATKAETKRPEKLEITDDKVELD</sequence>
<reference key="1">
    <citation type="journal article" date="2009" name="Genome Res.">
        <title>Comparative genomics of protoploid Saccharomycetaceae.</title>
        <authorList>
            <consortium name="The Genolevures Consortium"/>
            <person name="Souciet J.-L."/>
            <person name="Dujon B."/>
            <person name="Gaillardin C."/>
            <person name="Johnston M."/>
            <person name="Baret P.V."/>
            <person name="Cliften P."/>
            <person name="Sherman D.J."/>
            <person name="Weissenbach J."/>
            <person name="Westhof E."/>
            <person name="Wincker P."/>
            <person name="Jubin C."/>
            <person name="Poulain J."/>
            <person name="Barbe V."/>
            <person name="Segurens B."/>
            <person name="Artiguenave F."/>
            <person name="Anthouard V."/>
            <person name="Vacherie B."/>
            <person name="Val M.-E."/>
            <person name="Fulton R.S."/>
            <person name="Minx P."/>
            <person name="Wilson R."/>
            <person name="Durrens P."/>
            <person name="Jean G."/>
            <person name="Marck C."/>
            <person name="Martin T."/>
            <person name="Nikolski M."/>
            <person name="Rolland T."/>
            <person name="Seret M.-L."/>
            <person name="Casaregola S."/>
            <person name="Despons L."/>
            <person name="Fairhead C."/>
            <person name="Fischer G."/>
            <person name="Lafontaine I."/>
            <person name="Leh V."/>
            <person name="Lemaire M."/>
            <person name="de Montigny J."/>
            <person name="Neuveglise C."/>
            <person name="Thierry A."/>
            <person name="Blanc-Lenfle I."/>
            <person name="Bleykasten C."/>
            <person name="Diffels J."/>
            <person name="Fritsch E."/>
            <person name="Frangeul L."/>
            <person name="Goeffon A."/>
            <person name="Jauniaux N."/>
            <person name="Kachouri-Lafond R."/>
            <person name="Payen C."/>
            <person name="Potier S."/>
            <person name="Pribylova L."/>
            <person name="Ozanne C."/>
            <person name="Richard G.-F."/>
            <person name="Sacerdot C."/>
            <person name="Straub M.-L."/>
            <person name="Talla E."/>
        </authorList>
    </citation>
    <scope>NUCLEOTIDE SEQUENCE [LARGE SCALE GENOMIC DNA]</scope>
    <source>
        <strain>ATCC 2623 / CBS 732 / BCRC 21506 / NBRC 1130 / NCYC 568 / NRRL Y-229</strain>
    </source>
</reference>
<feature type="chain" id="PRO_0000388623" description="Golgi to ER traffic protein 1">
    <location>
        <begin position="1"/>
        <end position="237"/>
    </location>
</feature>
<feature type="topological domain" description="Lumenal" evidence="1">
    <location>
        <begin position="1"/>
        <end position="4"/>
    </location>
</feature>
<feature type="transmembrane region" description="Helical" evidence="1">
    <location>
        <begin position="5"/>
        <end position="24"/>
    </location>
</feature>
<feature type="topological domain" description="Cytoplasmic" evidence="1">
    <location>
        <begin position="25"/>
        <end position="110"/>
    </location>
</feature>
<feature type="transmembrane region" description="Helical" evidence="1">
    <location>
        <begin position="111"/>
        <end position="131"/>
    </location>
</feature>
<feature type="topological domain" description="Lumenal" evidence="1">
    <location>
        <begin position="132"/>
        <end position="176"/>
    </location>
</feature>
<feature type="transmembrane region" description="Helical" evidence="1">
    <location>
        <begin position="177"/>
        <end position="193"/>
    </location>
</feature>
<feature type="topological domain" description="Cytoplasmic" evidence="1">
    <location>
        <begin position="194"/>
        <end position="237"/>
    </location>
</feature>
<feature type="region of interest" description="Disordered" evidence="2">
    <location>
        <begin position="205"/>
        <end position="237"/>
    </location>
</feature>
<feature type="coiled-coil region" evidence="1">
    <location>
        <begin position="40"/>
        <end position="99"/>
    </location>
</feature>
<feature type="compositionally biased region" description="Basic and acidic residues" evidence="2">
    <location>
        <begin position="217"/>
        <end position="237"/>
    </location>
</feature>
<organism>
    <name type="scientific">Zygosaccharomyces rouxii (strain ATCC 2623 / CBS 732 / NBRC 1130 / NCYC 568 / NRRL Y-229)</name>
    <dbReference type="NCBI Taxonomy" id="559307"/>
    <lineage>
        <taxon>Eukaryota</taxon>
        <taxon>Fungi</taxon>
        <taxon>Dikarya</taxon>
        <taxon>Ascomycota</taxon>
        <taxon>Saccharomycotina</taxon>
        <taxon>Saccharomycetes</taxon>
        <taxon>Saccharomycetales</taxon>
        <taxon>Saccharomycetaceae</taxon>
        <taxon>Zygosaccharomyces</taxon>
    </lineage>
</organism>
<comment type="function">
    <text evidence="1">Required for the post-translational delivery of tail-anchored (TA) proteins to the endoplasmic reticulum. Together with GET2, acts as a membrane receptor for soluble GET3, which recognizes and selectively binds the transmembrane domain of TA proteins in the cytosol. The GET complex cooperates with the HDEL receptor ERD2 to mediate the ATP-dependent retrieval of resident ER proteins that contain a C-terminal H-D-E-L retention signal from the Golgi to the ER.</text>
</comment>
<comment type="subunit">
    <text evidence="1">Component of the Golgi to ER traffic (GET) complex, which is composed of GET1, GET2 and GET3. Within the complex, GET1 and GET2 form a heterotetramer which is stabilized by phosphatidylinositol binding and which binds to the GET3 homodimer.</text>
</comment>
<comment type="subcellular location">
    <subcellularLocation>
        <location evidence="1">Endoplasmic reticulum membrane</location>
        <topology evidence="1">Multi-pass membrane protein</topology>
    </subcellularLocation>
    <subcellularLocation>
        <location evidence="1">Golgi apparatus membrane</location>
        <topology evidence="1">Multi-pass membrane protein</topology>
    </subcellularLocation>
</comment>
<comment type="similarity">
    <text evidence="1">Belongs to the WRB/GET1 family.</text>
</comment>
<name>GET1_ZYGRC</name>
<gene>
    <name evidence="1" type="primary">GET1</name>
    <name type="ordered locus">ZYRO0G09944g</name>
</gene>
<protein>
    <recommendedName>
        <fullName evidence="1">Golgi to ER traffic protein 1</fullName>
    </recommendedName>
    <alternativeName>
        <fullName evidence="1">Guided entry of tail-anchored proteins 1</fullName>
    </alternativeName>
</protein>
<evidence type="ECO:0000255" key="1">
    <source>
        <dbReference type="HAMAP-Rule" id="MF_03113"/>
    </source>
</evidence>
<evidence type="ECO:0000256" key="2">
    <source>
        <dbReference type="SAM" id="MobiDB-lite"/>
    </source>
</evidence>
<proteinExistence type="inferred from homology"/>
<keyword id="KW-0175">Coiled coil</keyword>
<keyword id="KW-0256">Endoplasmic reticulum</keyword>
<keyword id="KW-0931">ER-Golgi transport</keyword>
<keyword id="KW-0333">Golgi apparatus</keyword>
<keyword id="KW-0472">Membrane</keyword>
<keyword id="KW-1185">Reference proteome</keyword>
<keyword id="KW-0812">Transmembrane</keyword>
<keyword id="KW-1133">Transmembrane helix</keyword>
<keyword id="KW-0813">Transport</keyword>